<protein>
    <recommendedName>
        <fullName>DNA ligase B</fullName>
        <ecNumber>6.5.1.2</ecNumber>
    </recommendedName>
    <alternativeName>
        <fullName>Polydeoxyribonucleotide synthase [NAD(+)] B</fullName>
    </alternativeName>
</protein>
<dbReference type="EC" id="6.5.1.2"/>
<dbReference type="EMBL" id="L10328">
    <property type="protein sequence ID" value="AAA62000.1"/>
    <property type="status" value="ALT_INIT"/>
    <property type="molecule type" value="Genomic_DNA"/>
</dbReference>
<dbReference type="EMBL" id="U00096">
    <property type="protein sequence ID" value="AAC76671.2"/>
    <property type="molecule type" value="Genomic_DNA"/>
</dbReference>
<dbReference type="EMBL" id="AP009048">
    <property type="protein sequence ID" value="BAE77646.1"/>
    <property type="molecule type" value="Genomic_DNA"/>
</dbReference>
<dbReference type="EMBL" id="M84400">
    <property type="protein sequence ID" value="AAB88710.1"/>
    <property type="status" value="ALT_INIT"/>
    <property type="molecule type" value="Genomic_DNA"/>
</dbReference>
<dbReference type="PIR" id="A65166">
    <property type="entry name" value="A65166"/>
</dbReference>
<dbReference type="RefSeq" id="NP_418104.2">
    <property type="nucleotide sequence ID" value="NC_000913.3"/>
</dbReference>
<dbReference type="RefSeq" id="WP_000870036.1">
    <property type="nucleotide sequence ID" value="NZ_LN832404.1"/>
</dbReference>
<dbReference type="SMR" id="P25772"/>
<dbReference type="BioGRID" id="4262567">
    <property type="interactions" value="170"/>
</dbReference>
<dbReference type="FunCoup" id="P25772">
    <property type="interactions" value="125"/>
</dbReference>
<dbReference type="IntAct" id="P25772">
    <property type="interactions" value="3"/>
</dbReference>
<dbReference type="STRING" id="511145.b3647"/>
<dbReference type="PaxDb" id="511145-b3647"/>
<dbReference type="DNASU" id="948164"/>
<dbReference type="EnsemblBacteria" id="AAC76671">
    <property type="protein sequence ID" value="AAC76671"/>
    <property type="gene ID" value="b3647"/>
</dbReference>
<dbReference type="GeneID" id="948164"/>
<dbReference type="KEGG" id="ecj:JW3622"/>
<dbReference type="KEGG" id="eco:b3647"/>
<dbReference type="KEGG" id="ecoc:C3026_19760"/>
<dbReference type="PATRIC" id="fig|511145.12.peg.3767"/>
<dbReference type="EchoBASE" id="EB1310"/>
<dbReference type="eggNOG" id="COG0272">
    <property type="taxonomic scope" value="Bacteria"/>
</dbReference>
<dbReference type="HOGENOM" id="CLU_489786_0_0_6"/>
<dbReference type="InParanoid" id="P25772"/>
<dbReference type="OMA" id="DLWIQPK"/>
<dbReference type="OrthoDB" id="9759736at2"/>
<dbReference type="PhylomeDB" id="P25772"/>
<dbReference type="BioCyc" id="EcoCyc:EG11334-MONOMER"/>
<dbReference type="BioCyc" id="MetaCyc:EG11334-MONOMER"/>
<dbReference type="PRO" id="PR:P25772"/>
<dbReference type="Proteomes" id="UP000000625">
    <property type="component" value="Chromosome"/>
</dbReference>
<dbReference type="GO" id="GO:0003911">
    <property type="term" value="F:DNA ligase (NAD+) activity"/>
    <property type="evidence" value="ECO:0000314"/>
    <property type="project" value="EcoCyc"/>
</dbReference>
<dbReference type="GO" id="GO:0006281">
    <property type="term" value="P:DNA repair"/>
    <property type="evidence" value="ECO:0007669"/>
    <property type="project" value="UniProtKB-KW"/>
</dbReference>
<dbReference type="GO" id="GO:0006260">
    <property type="term" value="P:DNA replication"/>
    <property type="evidence" value="ECO:0007669"/>
    <property type="project" value="UniProtKB-KW"/>
</dbReference>
<dbReference type="FunFam" id="1.10.287.610:FF:000003">
    <property type="entry name" value="DNA ligase B"/>
    <property type="match status" value="1"/>
</dbReference>
<dbReference type="FunFam" id="2.40.50.140:FF:000139">
    <property type="entry name" value="DNA ligase B"/>
    <property type="match status" value="1"/>
</dbReference>
<dbReference type="FunFam" id="3.30.470.30:FF:000007">
    <property type="entry name" value="DNA ligase B"/>
    <property type="match status" value="1"/>
</dbReference>
<dbReference type="Gene3D" id="3.30.470.30">
    <property type="entry name" value="DNA ligase/mRNA capping enzyme"/>
    <property type="match status" value="1"/>
</dbReference>
<dbReference type="Gene3D" id="1.10.287.610">
    <property type="entry name" value="Helix hairpin bin"/>
    <property type="match status" value="1"/>
</dbReference>
<dbReference type="Gene3D" id="2.40.50.140">
    <property type="entry name" value="Nucleic acid-binding proteins"/>
    <property type="match status" value="1"/>
</dbReference>
<dbReference type="HAMAP" id="MF_01587">
    <property type="entry name" value="DNA_ligase_B"/>
    <property type="match status" value="1"/>
</dbReference>
<dbReference type="InterPro" id="IPR018239">
    <property type="entry name" value="DNA_ligase_AS"/>
</dbReference>
<dbReference type="InterPro" id="IPR020923">
    <property type="entry name" value="DNA_ligase_B"/>
</dbReference>
<dbReference type="InterPro" id="IPR033136">
    <property type="entry name" value="DNA_ligase_CS"/>
</dbReference>
<dbReference type="InterPro" id="IPR013839">
    <property type="entry name" value="DNAligase_adenylation"/>
</dbReference>
<dbReference type="InterPro" id="IPR013840">
    <property type="entry name" value="DNAligase_N"/>
</dbReference>
<dbReference type="InterPro" id="IPR012340">
    <property type="entry name" value="NA-bd_OB-fold"/>
</dbReference>
<dbReference type="InterPro" id="IPR050326">
    <property type="entry name" value="NAD_dep_DNA_ligaseB"/>
</dbReference>
<dbReference type="InterPro" id="IPR004150">
    <property type="entry name" value="NAD_DNA_ligase_OB"/>
</dbReference>
<dbReference type="InterPro" id="IPR010994">
    <property type="entry name" value="RuvA_2-like"/>
</dbReference>
<dbReference type="NCBIfam" id="NF005987">
    <property type="entry name" value="PRK08097.1"/>
    <property type="match status" value="1"/>
</dbReference>
<dbReference type="PANTHER" id="PTHR47810">
    <property type="entry name" value="DNA LIGASE"/>
    <property type="match status" value="1"/>
</dbReference>
<dbReference type="PANTHER" id="PTHR47810:SF1">
    <property type="entry name" value="DNA LIGASE B"/>
    <property type="match status" value="1"/>
</dbReference>
<dbReference type="Pfam" id="PF01653">
    <property type="entry name" value="DNA_ligase_aden"/>
    <property type="match status" value="1"/>
</dbReference>
<dbReference type="Pfam" id="PF03120">
    <property type="entry name" value="DNA_ligase_OB"/>
    <property type="match status" value="1"/>
</dbReference>
<dbReference type="SMART" id="SM00532">
    <property type="entry name" value="LIGANc"/>
    <property type="match status" value="1"/>
</dbReference>
<dbReference type="SUPFAM" id="SSF56091">
    <property type="entry name" value="DNA ligase/mRNA capping enzyme, catalytic domain"/>
    <property type="match status" value="1"/>
</dbReference>
<dbReference type="SUPFAM" id="SSF50249">
    <property type="entry name" value="Nucleic acid-binding proteins"/>
    <property type="match status" value="1"/>
</dbReference>
<dbReference type="SUPFAM" id="SSF47781">
    <property type="entry name" value="RuvA domain 2-like"/>
    <property type="match status" value="1"/>
</dbReference>
<dbReference type="PROSITE" id="PS01055">
    <property type="entry name" value="DNA_LIGASE_N1"/>
    <property type="match status" value="1"/>
</dbReference>
<dbReference type="PROSITE" id="PS01056">
    <property type="entry name" value="DNA_LIGASE_N2"/>
    <property type="match status" value="1"/>
</dbReference>
<name>LIGB_ECOLI</name>
<organism>
    <name type="scientific">Escherichia coli (strain K12)</name>
    <dbReference type="NCBI Taxonomy" id="83333"/>
    <lineage>
        <taxon>Bacteria</taxon>
        <taxon>Pseudomonadati</taxon>
        <taxon>Pseudomonadota</taxon>
        <taxon>Gammaproteobacteria</taxon>
        <taxon>Enterobacterales</taxon>
        <taxon>Enterobacteriaceae</taxon>
        <taxon>Escherichia</taxon>
    </lineage>
</organism>
<gene>
    <name type="primary">ligB</name>
    <name type="synonym">yicF</name>
    <name type="ordered locus">b3647</name>
    <name type="ordered locus">JW3622</name>
</gene>
<sequence>MKVWMAILIGILCWQSSVWAVCPAWSPARAQEEISRLQQQIKQWDDDYWKEGKSEVEDGVYDQLSARLTQWQRCFGSEPRDVMMPPLNGAVMHPVAHTGVRKMVDKNALSLWMRERSDLWVQPKVDGVAVTLVYRDGKLNKAISRGNGLKGEDWTQKVSLISAVPQTVSGPLANSTLQGEIFLQREGHIQQQMGGINARAKVAGLMMRQDDSDTLNSLGVFVWAWPDGPQLMSDRLKELATAGFTLTQTYTRAVKNADEVARVRNEWWKAELPFVTDGVVVRAAKEPESRHWLPGQAEWLVAWKYQPVAQVAEVKAIQFAVGKSGKISVVASLAPVMLDDKKVQRVNIGSVRRWQEWDIAPGDQILVSLAGQGIPRIDDVVWRGAERTKPTPPENRFNSLTCYFASDVCQEQFISRLVWLGAKQVLGLDGIGEAGWRALHQTHRFEHIFSWLLLTPEQLQNTPGIAKSKSAQLWHQFNLARKQPFTRWVMAMGIPLTRAALNASDERSWSQLLFSTEQFWQQLPGTGSGRARQVIEWKENAQIKKLGSWLAAQQITGFEP</sequence>
<proteinExistence type="evidence at protein level"/>
<evidence type="ECO:0000269" key="1">
    <source>
    </source>
</evidence>
<evidence type="ECO:0000305" key="2"/>
<accession>P25772</accession>
<accession>P78120</accession>
<accession>Q2M7W0</accession>
<feature type="chain" id="PRO_0000161776" description="DNA ligase B">
    <location>
        <begin position="1"/>
        <end position="560"/>
    </location>
</feature>
<feature type="active site" description="N6-AMP-lysine intermediate" evidence="2">
    <location>
        <position position="124"/>
    </location>
</feature>
<feature type="mutagenesis site" description="Loss of activity." evidence="1">
    <original>K</original>
    <variation>A</variation>
    <location>
        <position position="124"/>
    </location>
</feature>
<keyword id="KW-0227">DNA damage</keyword>
<keyword id="KW-0234">DNA repair</keyword>
<keyword id="KW-0235">DNA replication</keyword>
<keyword id="KW-0436">Ligase</keyword>
<keyword id="KW-0460">Magnesium</keyword>
<keyword id="KW-0464">Manganese</keyword>
<keyword id="KW-0520">NAD</keyword>
<keyword id="KW-1185">Reference proteome</keyword>
<comment type="function">
    <text evidence="1">Catalyzes the formation of phosphodiester linkages between 5'-phosphoryl and 3'-hydroxyl groups in double-stranded DNA using NAD as a coenzyme and as the energy source for the reaction.</text>
</comment>
<comment type="catalytic activity">
    <reaction>
        <text>NAD(+) + (deoxyribonucleotide)n-3'-hydroxyl + 5'-phospho-(deoxyribonucleotide)m = (deoxyribonucleotide)n+m + AMP + beta-nicotinamide D-nucleotide.</text>
        <dbReference type="EC" id="6.5.1.2"/>
    </reaction>
</comment>
<comment type="cofactor">
    <cofactor evidence="1">
        <name>Mg(2+)</name>
        <dbReference type="ChEBI" id="CHEBI:18420"/>
    </cofactor>
    <cofactor evidence="1">
        <name>Mn(2+)</name>
        <dbReference type="ChEBI" id="CHEBI:29035"/>
    </cofactor>
</comment>
<comment type="miscellaneous">
    <text>Considerably less active in nick joining than LigA.</text>
</comment>
<comment type="similarity">
    <text evidence="2">Belongs to the NAD-dependent DNA ligase family. LigB subfamily.</text>
</comment>
<comment type="sequence caution" evidence="2">
    <conflict type="erroneous initiation">
        <sequence resource="EMBL-CDS" id="AAA62000"/>
    </conflict>
    <text>Extended N-terminus.</text>
</comment>
<comment type="sequence caution" evidence="2">
    <conflict type="erroneous initiation">
        <sequence resource="EMBL-CDS" id="AAB88710"/>
    </conflict>
    <text>Extended N-terminus.</text>
</comment>
<reference key="1">
    <citation type="journal article" date="1993" name="Genomics">
        <title>DNA sequence and analysis of 136 kilobases of the Escherichia coli genome: organizational symmetry around the origin of replication.</title>
        <authorList>
            <person name="Burland V.D."/>
            <person name="Plunkett G. III"/>
            <person name="Daniels D.L."/>
            <person name="Blattner F.R."/>
        </authorList>
    </citation>
    <scope>NUCLEOTIDE SEQUENCE [LARGE SCALE GENOMIC DNA]</scope>
    <source>
        <strain>K12 / MG1655 / ATCC 47076</strain>
    </source>
</reference>
<reference key="2">
    <citation type="journal article" date="1997" name="Science">
        <title>The complete genome sequence of Escherichia coli K-12.</title>
        <authorList>
            <person name="Blattner F.R."/>
            <person name="Plunkett G. III"/>
            <person name="Bloch C.A."/>
            <person name="Perna N.T."/>
            <person name="Burland V."/>
            <person name="Riley M."/>
            <person name="Collado-Vides J."/>
            <person name="Glasner J.D."/>
            <person name="Rode C.K."/>
            <person name="Mayhew G.F."/>
            <person name="Gregor J."/>
            <person name="Davis N.W."/>
            <person name="Kirkpatrick H.A."/>
            <person name="Goeden M.A."/>
            <person name="Rose D.J."/>
            <person name="Mau B."/>
            <person name="Shao Y."/>
        </authorList>
    </citation>
    <scope>NUCLEOTIDE SEQUENCE [LARGE SCALE GENOMIC DNA]</scope>
    <source>
        <strain>K12 / MG1655 / ATCC 47076</strain>
    </source>
</reference>
<reference key="3">
    <citation type="journal article" date="2006" name="Mol. Syst. Biol.">
        <title>Highly accurate genome sequences of Escherichia coli K-12 strains MG1655 and W3110.</title>
        <authorList>
            <person name="Hayashi K."/>
            <person name="Morooka N."/>
            <person name="Yamamoto Y."/>
            <person name="Fujita K."/>
            <person name="Isono K."/>
            <person name="Choi S."/>
            <person name="Ohtsubo E."/>
            <person name="Baba T."/>
            <person name="Wanner B.L."/>
            <person name="Mori H."/>
            <person name="Horiuchi T."/>
        </authorList>
    </citation>
    <scope>NUCLEOTIDE SEQUENCE [LARGE SCALE GENOMIC DNA]</scope>
    <source>
        <strain>K12 / W3110 / ATCC 27325 / DSM 5911</strain>
    </source>
</reference>
<reference key="4">
    <citation type="journal article" date="1993" name="J. Biol. Chem.">
        <title>Guanylate kinase of Escherichia coli K-12.</title>
        <authorList>
            <person name="Gentry D."/>
            <person name="Bengra C."/>
            <person name="Ikehara K."/>
            <person name="Cashel M."/>
        </authorList>
    </citation>
    <scope>NUCLEOTIDE SEQUENCE [GENOMIC DNA] OF 1-217</scope>
    <source>
        <strain>K12</strain>
    </source>
</reference>
<reference key="5">
    <citation type="journal article" date="2001" name="Nucleic Acids Res.">
        <title>A second NAD(+)-dependent DNA ligase (LigB) in Escherichia coli.</title>
        <authorList>
            <person name="Sriskanda V."/>
            <person name="Shuman S."/>
        </authorList>
    </citation>
    <scope>FUNCTION</scope>
    <scope>COFACTOR</scope>
    <scope>MUTAGENESIS OF LYS-124</scope>
    <source>
        <strain>K12</strain>
    </source>
</reference>